<feature type="chain" id="PRO_0000138842" description="Catabolic 3-dehydroquinate dehydratase">
    <location>
        <begin position="1"/>
        <end position="272"/>
    </location>
</feature>
<feature type="active site" description="Proton donor/acceptor" evidence="1">
    <location>
        <position position="163"/>
    </location>
</feature>
<feature type="active site" description="Schiff-base intermediate with substrate" evidence="1">
    <location>
        <position position="190"/>
    </location>
</feature>
<feature type="binding site" evidence="1">
    <location>
        <begin position="66"/>
        <end position="68"/>
    </location>
    <ligand>
        <name>3-dehydroquinate</name>
        <dbReference type="ChEBI" id="CHEBI:32364"/>
    </ligand>
</feature>
<feature type="binding site" evidence="1">
    <location>
        <position position="102"/>
    </location>
    <ligand>
        <name>3-dehydroquinate</name>
        <dbReference type="ChEBI" id="CHEBI:32364"/>
    </ligand>
</feature>
<feature type="binding site" evidence="1">
    <location>
        <position position="232"/>
    </location>
    <ligand>
        <name>3-dehydroquinate</name>
        <dbReference type="ChEBI" id="CHEBI:32364"/>
    </ligand>
</feature>
<feature type="binding site" evidence="1">
    <location>
        <position position="251"/>
    </location>
    <ligand>
        <name>3-dehydroquinate</name>
        <dbReference type="ChEBI" id="CHEBI:32364"/>
    </ligand>
</feature>
<feature type="binding site" evidence="1">
    <location>
        <position position="255"/>
    </location>
    <ligand>
        <name>3-dehydroquinate</name>
        <dbReference type="ChEBI" id="CHEBI:32364"/>
    </ligand>
</feature>
<gene>
    <name evidence="3" type="primary">quiB</name>
    <name type="ordered locus">ACIAD1713</name>
</gene>
<evidence type="ECO:0000250" key="1">
    <source>
        <dbReference type="UniProtKB" id="P58687"/>
    </source>
</evidence>
<evidence type="ECO:0000269" key="2">
    <source>
    </source>
</evidence>
<evidence type="ECO:0000303" key="3">
    <source>
    </source>
</evidence>
<evidence type="ECO:0000305" key="4"/>
<evidence type="ECO:0000305" key="5">
    <source>
    </source>
</evidence>
<name>3DHQ_ACIAD</name>
<sequence>MSLPILSTTYAAENTVPASKSTYVVKNLNIGDLPVKTLVPITAKTREQALAQAKVIAENKDADIAEFRIDLLEFASDTKKVIALGQELNQILKDKPLLATIRTSNEGGKLKVTDQEYEKIYSEYLKKPFMQLLDIEMFRDQAAVAKLTKLAHQKKVLVVMSNHDFDKTPSEQEIVSRLLKQDQMGADILKIAVMPKSKQDVFTLMNATLKVSEQSTKPLLTMSMGRLGTISRIATANMGGSLSFGMIGEASAPGQIDVTALKQFLKTVQPTP</sequence>
<proteinExistence type="evidence at transcript level"/>
<keyword id="KW-0456">Lyase</keyword>
<keyword id="KW-0672">Quinate metabolism</keyword>
<keyword id="KW-0704">Schiff base</keyword>
<accession>Q59087</accession>
<accession>Q6FBK7</accession>
<reference key="1">
    <citation type="journal article" date="1995" name="J. Bacteriol.">
        <title>Unusual ancestry of dehydratases associated with quinate catabolism in Acinetobacter calcoaceticus.</title>
        <authorList>
            <person name="Elsemore D.A."/>
            <person name="Ornston L.N."/>
        </authorList>
    </citation>
    <scope>NUCLEOTIDE SEQUENCE [GENOMIC DNA]</scope>
    <scope>FUNCTION</scope>
    <scope>INDUCTION</scope>
    <source>
        <strain>ATCC 33305 / BD413 / ADP1</strain>
    </source>
</reference>
<reference key="2">
    <citation type="journal article" date="2004" name="Nucleic Acids Res.">
        <title>Unique features revealed by the genome sequence of Acinetobacter sp. ADP1, a versatile and naturally transformation competent bacterium.</title>
        <authorList>
            <person name="Barbe V."/>
            <person name="Vallenet D."/>
            <person name="Fonknechten N."/>
            <person name="Kreimeyer A."/>
            <person name="Oztas S."/>
            <person name="Labarre L."/>
            <person name="Cruveiller S."/>
            <person name="Robert C."/>
            <person name="Duprat S."/>
            <person name="Wincker P."/>
            <person name="Ornston L.N."/>
            <person name="Weissenbach J."/>
            <person name="Marliere P."/>
            <person name="Cohen G.N."/>
            <person name="Medigue C."/>
        </authorList>
    </citation>
    <scope>NUCLEOTIDE SEQUENCE [LARGE SCALE GENOMIC DNA]</scope>
    <source>
        <strain>ATCC 33305 / BD413 / ADP1</strain>
    </source>
</reference>
<protein>
    <recommendedName>
        <fullName evidence="3">Catabolic 3-dehydroquinate dehydratase</fullName>
        <shortName evidence="3">3-dehydroquinase</shortName>
        <ecNumber evidence="1">4.2.1.10</ecNumber>
    </recommendedName>
</protein>
<comment type="function">
    <text evidence="2">Involved in the biosynthesis of protocatechuate. Catalyzes the catabolic dehydration of 3-dehydroquinate (DHQ) to yield 3-dehydroshikimate.</text>
</comment>
<comment type="catalytic activity">
    <reaction evidence="1">
        <text>3-dehydroquinate = 3-dehydroshikimate + H2O</text>
        <dbReference type="Rhea" id="RHEA:21096"/>
        <dbReference type="ChEBI" id="CHEBI:15377"/>
        <dbReference type="ChEBI" id="CHEBI:16630"/>
        <dbReference type="ChEBI" id="CHEBI:32364"/>
        <dbReference type="EC" id="4.2.1.10"/>
    </reaction>
</comment>
<comment type="pathway">
    <text evidence="5">Aromatic compound metabolism; 3,4-dihydroxybenzoate biosynthesis; 3,4-dihydroxybenzoate from 3-dehydroquinate: step 1/2.</text>
</comment>
<comment type="induction">
    <text evidence="2">By protocatechuate.</text>
</comment>
<comment type="similarity">
    <text evidence="1">Belongs to the type-I 3-dehydroquinase family.</text>
</comment>
<comment type="sequence caution" evidence="4">
    <conflict type="erroneous initiation">
        <sequence resource="EMBL-CDS" id="AAC37158"/>
    </conflict>
    <text>Extended N-terminus.</text>
</comment>
<comment type="sequence caution" evidence="4">
    <conflict type="erroneous initiation">
        <sequence resource="EMBL-CDS" id="CAG68555"/>
    </conflict>
    <text>Extended N-terminus.</text>
</comment>
<organism>
    <name type="scientific">Acinetobacter baylyi (strain ATCC 33305 / BD413 / ADP1)</name>
    <dbReference type="NCBI Taxonomy" id="62977"/>
    <lineage>
        <taxon>Bacteria</taxon>
        <taxon>Pseudomonadati</taxon>
        <taxon>Pseudomonadota</taxon>
        <taxon>Gammaproteobacteria</taxon>
        <taxon>Moraxellales</taxon>
        <taxon>Moraxellaceae</taxon>
        <taxon>Acinetobacter</taxon>
    </lineage>
</organism>
<dbReference type="EC" id="4.2.1.10" evidence="1"/>
<dbReference type="EMBL" id="L05770">
    <property type="protein sequence ID" value="AAC37158.1"/>
    <property type="status" value="ALT_INIT"/>
    <property type="molecule type" value="Genomic_DNA"/>
</dbReference>
<dbReference type="EMBL" id="CR543861">
    <property type="protein sequence ID" value="CAG68555.1"/>
    <property type="status" value="ALT_INIT"/>
    <property type="molecule type" value="Genomic_DNA"/>
</dbReference>
<dbReference type="SMR" id="Q59087"/>
<dbReference type="STRING" id="202950.GCA_001485005_03091"/>
<dbReference type="KEGG" id="aci:ACIAD1713"/>
<dbReference type="eggNOG" id="COG0710">
    <property type="taxonomic scope" value="Bacteria"/>
</dbReference>
<dbReference type="HOGENOM" id="CLU_064444_0_0_6"/>
<dbReference type="BioCyc" id="MetaCyc:MONOMER-33"/>
<dbReference type="UniPathway" id="UPA00088">
    <property type="reaction ID" value="UER00178"/>
</dbReference>
<dbReference type="Proteomes" id="UP000000430">
    <property type="component" value="Chromosome"/>
</dbReference>
<dbReference type="GO" id="GO:0003855">
    <property type="term" value="F:3-dehydroquinate dehydratase activity"/>
    <property type="evidence" value="ECO:0000314"/>
    <property type="project" value="UniProtKB"/>
</dbReference>
<dbReference type="GO" id="GO:0046279">
    <property type="term" value="P:3,4-dihydroxybenzoate biosynthetic process"/>
    <property type="evidence" value="ECO:0000314"/>
    <property type="project" value="UniProtKB"/>
</dbReference>
<dbReference type="GO" id="GO:0009423">
    <property type="term" value="P:chorismate biosynthetic process"/>
    <property type="evidence" value="ECO:0007669"/>
    <property type="project" value="UniProtKB-UniRule"/>
</dbReference>
<dbReference type="GO" id="GO:0019630">
    <property type="term" value="P:quinate metabolic process"/>
    <property type="evidence" value="ECO:0007669"/>
    <property type="project" value="UniProtKB-KW"/>
</dbReference>
<dbReference type="CDD" id="cd00502">
    <property type="entry name" value="DHQase_I"/>
    <property type="match status" value="1"/>
</dbReference>
<dbReference type="FunFam" id="3.20.20.70:FF:000047">
    <property type="entry name" value="3-dehydroquinate dehydratase"/>
    <property type="match status" value="1"/>
</dbReference>
<dbReference type="Gene3D" id="3.20.20.70">
    <property type="entry name" value="Aldolase class I"/>
    <property type="match status" value="1"/>
</dbReference>
<dbReference type="HAMAP" id="MF_00214">
    <property type="entry name" value="AroD"/>
    <property type="match status" value="1"/>
</dbReference>
<dbReference type="InterPro" id="IPR018508">
    <property type="entry name" value="3-dehydroquinate_DH_AS"/>
</dbReference>
<dbReference type="InterPro" id="IPR013785">
    <property type="entry name" value="Aldolase_TIM"/>
</dbReference>
<dbReference type="InterPro" id="IPR001381">
    <property type="entry name" value="DHquinase_I"/>
</dbReference>
<dbReference type="InterPro" id="IPR050146">
    <property type="entry name" value="Type-I_3-dehydroquinase"/>
</dbReference>
<dbReference type="NCBIfam" id="TIGR01093">
    <property type="entry name" value="aroD"/>
    <property type="match status" value="1"/>
</dbReference>
<dbReference type="PANTHER" id="PTHR43699">
    <property type="entry name" value="3-DEHYDROQUINATE DEHYDRATASE"/>
    <property type="match status" value="1"/>
</dbReference>
<dbReference type="PANTHER" id="PTHR43699:SF1">
    <property type="entry name" value="3-DEHYDROQUINATE DEHYDRATASE"/>
    <property type="match status" value="1"/>
</dbReference>
<dbReference type="Pfam" id="PF01487">
    <property type="entry name" value="DHquinase_I"/>
    <property type="match status" value="1"/>
</dbReference>
<dbReference type="SUPFAM" id="SSF51569">
    <property type="entry name" value="Aldolase"/>
    <property type="match status" value="1"/>
</dbReference>
<dbReference type="PROSITE" id="PS01028">
    <property type="entry name" value="DEHYDROQUINASE_I"/>
    <property type="match status" value="1"/>
</dbReference>